<keyword id="KW-0456">Lyase</keyword>
<keyword id="KW-0479">Metal-binding</keyword>
<keyword id="KW-0597">Phosphoprotein</keyword>
<keyword id="KW-1185">Reference proteome</keyword>
<keyword id="KW-0862">Zinc</keyword>
<reference key="1">
    <citation type="journal article" date="2004" name="J. Mol. Microbiol. Biotechnol.">
        <title>The complete genome sequence of Bacillus licheniformis DSM13, an organism with great industrial potential.</title>
        <authorList>
            <person name="Veith B."/>
            <person name="Herzberg C."/>
            <person name="Steckel S."/>
            <person name="Feesche J."/>
            <person name="Maurer K.H."/>
            <person name="Ehrenreich P."/>
            <person name="Baeumer S."/>
            <person name="Henne A."/>
            <person name="Liesegang H."/>
            <person name="Merkl R."/>
            <person name="Ehrenreich A."/>
            <person name="Gottschalk G."/>
        </authorList>
    </citation>
    <scope>NUCLEOTIDE SEQUENCE [LARGE SCALE GENOMIC DNA]</scope>
    <source>
        <strain>ATCC 14580 / DSM 13 / JCM 2505 / CCUG 7422 / NBRC 12200 / NCIMB 9375 / NCTC 10341 / NRRL NRS-1264 / Gibson 46</strain>
    </source>
</reference>
<reference key="2">
    <citation type="journal article" date="2004" name="Genome Biol.">
        <title>Complete genome sequence of the industrial bacterium Bacillus licheniformis and comparisons with closely related Bacillus species.</title>
        <authorList>
            <person name="Rey M.W."/>
            <person name="Ramaiya P."/>
            <person name="Nelson B.A."/>
            <person name="Brody-Karpin S.D."/>
            <person name="Zaretsky E.J."/>
            <person name="Tang M."/>
            <person name="Lopez de Leon A."/>
            <person name="Xiang H."/>
            <person name="Gusti V."/>
            <person name="Clausen I.G."/>
            <person name="Olsen P.B."/>
            <person name="Rasmussen M.D."/>
            <person name="Andersen J.T."/>
            <person name="Joergensen P.L."/>
            <person name="Larsen T.S."/>
            <person name="Sorokin A."/>
            <person name="Bolotin A."/>
            <person name="Lapidus A."/>
            <person name="Galleron N."/>
            <person name="Ehrlich S.D."/>
            <person name="Berka R.M."/>
        </authorList>
    </citation>
    <scope>NUCLEOTIDE SEQUENCE [LARGE SCALE GENOMIC DNA]</scope>
    <source>
        <strain>ATCC 14580 / DSM 13 / JCM 2505 / CCUG 7422 / NBRC 12200 / NCIMB 9375 / NCTC 10341 / NRRL NRS-1264 / Gibson 46</strain>
    </source>
</reference>
<protein>
    <recommendedName>
        <fullName>6-phospho-5-dehydro-2-deoxy-D-gluconate aldolase</fullName>
        <shortName>DKGP aldolase</shortName>
        <ecNumber>4.1.2.29</ecNumber>
    </recommendedName>
</protein>
<name>IOLJ_BACLD</name>
<comment type="function">
    <text evidence="1">Produces dihydroxyacetone phosphate (DHAP or glycerone phosphate) and malonic semialdehyde (MSA or 3-oxopropanoate) from 6-phospho-5-dehydro-2-deoxy-D-gluconate (DKGP).</text>
</comment>
<comment type="catalytic activity">
    <reaction>
        <text>6-phospho-5-dehydro-2-deoxy-D-gluconate = 3-oxopropanoate + dihydroxyacetone phosphate</text>
        <dbReference type="Rhea" id="RHEA:13177"/>
        <dbReference type="ChEBI" id="CHEBI:33190"/>
        <dbReference type="ChEBI" id="CHEBI:57642"/>
        <dbReference type="ChEBI" id="CHEBI:57949"/>
        <dbReference type="EC" id="4.1.2.29"/>
    </reaction>
</comment>
<comment type="cofactor">
    <cofactor evidence="1">
        <name>Zn(2+)</name>
        <dbReference type="ChEBI" id="CHEBI:29105"/>
    </cofactor>
</comment>
<comment type="pathway">
    <text>Polyol metabolism; myo-inositol degradation into acetyl-CoA; acetyl-CoA from myo-inositol: step 6/7.</text>
</comment>
<comment type="similarity">
    <text evidence="2">Belongs to the class II fructose-bisphosphate aldolase family. IolJ subfamily.</text>
</comment>
<feature type="chain" id="PRO_0000352283" description="6-phospho-5-dehydro-2-deoxy-D-gluconate aldolase">
    <location>
        <begin position="1"/>
        <end position="292"/>
    </location>
</feature>
<feature type="active site" description="Proton donor" evidence="1">
    <location>
        <position position="85"/>
    </location>
</feature>
<feature type="binding site" evidence="1">
    <location>
        <position position="86"/>
    </location>
    <ligand>
        <name>Zn(2+)</name>
        <dbReference type="ChEBI" id="CHEBI:29105"/>
        <note>catalytic</note>
    </ligand>
</feature>
<feature type="binding site" evidence="1">
    <location>
        <position position="180"/>
    </location>
    <ligand>
        <name>Zn(2+)</name>
        <dbReference type="ChEBI" id="CHEBI:29105"/>
        <note>catalytic</note>
    </ligand>
</feature>
<feature type="binding site" evidence="1">
    <location>
        <position position="181"/>
    </location>
    <ligand>
        <name>dihydroxyacetone phosphate</name>
        <dbReference type="ChEBI" id="CHEBI:57642"/>
    </ligand>
</feature>
<feature type="binding site" evidence="1">
    <location>
        <position position="208"/>
    </location>
    <ligand>
        <name>Zn(2+)</name>
        <dbReference type="ChEBI" id="CHEBI:29105"/>
        <note>catalytic</note>
    </ligand>
</feature>
<feature type="binding site" evidence="1">
    <location>
        <begin position="209"/>
        <end position="211"/>
    </location>
    <ligand>
        <name>dihydroxyacetone phosphate</name>
        <dbReference type="ChEBI" id="CHEBI:57642"/>
    </ligand>
</feature>
<feature type="binding site" evidence="1">
    <location>
        <begin position="230"/>
        <end position="233"/>
    </location>
    <ligand>
        <name>dihydroxyacetone phosphate</name>
        <dbReference type="ChEBI" id="CHEBI:57642"/>
    </ligand>
</feature>
<feature type="modified residue" description="Phosphothreonine" evidence="1">
    <location>
        <position position="233"/>
    </location>
</feature>
<dbReference type="EC" id="4.1.2.29"/>
<dbReference type="EMBL" id="CP000002">
    <property type="protein sequence ID" value="AAU25676.1"/>
    <property type="molecule type" value="Genomic_DNA"/>
</dbReference>
<dbReference type="EMBL" id="AE017333">
    <property type="protein sequence ID" value="AAU43055.1"/>
    <property type="molecule type" value="Genomic_DNA"/>
</dbReference>
<dbReference type="SMR" id="Q65D09"/>
<dbReference type="STRING" id="279010.BL00237"/>
<dbReference type="KEGG" id="bld:BLi04242"/>
<dbReference type="KEGG" id="bli:BL00237"/>
<dbReference type="eggNOG" id="COG0191">
    <property type="taxonomic scope" value="Bacteria"/>
</dbReference>
<dbReference type="HOGENOM" id="CLU_040088_0_1_9"/>
<dbReference type="UniPathway" id="UPA00076">
    <property type="reaction ID" value="UER00147"/>
</dbReference>
<dbReference type="Proteomes" id="UP000000606">
    <property type="component" value="Chromosome"/>
</dbReference>
<dbReference type="GO" id="GO:0047441">
    <property type="term" value="F:5-dehydro-2-deoxyphosphogluconate aldolase activity"/>
    <property type="evidence" value="ECO:0007669"/>
    <property type="project" value="UniProtKB-EC"/>
</dbReference>
<dbReference type="GO" id="GO:0004332">
    <property type="term" value="F:fructose-bisphosphate aldolase activity"/>
    <property type="evidence" value="ECO:0007669"/>
    <property type="project" value="InterPro"/>
</dbReference>
<dbReference type="GO" id="GO:0008270">
    <property type="term" value="F:zinc ion binding"/>
    <property type="evidence" value="ECO:0007669"/>
    <property type="project" value="InterPro"/>
</dbReference>
<dbReference type="GO" id="GO:0030388">
    <property type="term" value="P:fructose 1,6-bisphosphate metabolic process"/>
    <property type="evidence" value="ECO:0007669"/>
    <property type="project" value="InterPro"/>
</dbReference>
<dbReference type="GO" id="GO:0006096">
    <property type="term" value="P:glycolytic process"/>
    <property type="evidence" value="ECO:0007669"/>
    <property type="project" value="InterPro"/>
</dbReference>
<dbReference type="CDD" id="cd00947">
    <property type="entry name" value="TBP_aldolase_IIB"/>
    <property type="match status" value="1"/>
</dbReference>
<dbReference type="Gene3D" id="3.20.20.70">
    <property type="entry name" value="Aldolase class I"/>
    <property type="match status" value="1"/>
</dbReference>
<dbReference type="InterPro" id="IPR013785">
    <property type="entry name" value="Aldolase_TIM"/>
</dbReference>
<dbReference type="InterPro" id="IPR050246">
    <property type="entry name" value="Class_II_FBP_aldolase"/>
</dbReference>
<dbReference type="InterPro" id="IPR000771">
    <property type="entry name" value="FBA_II"/>
</dbReference>
<dbReference type="InterPro" id="IPR011289">
    <property type="entry name" value="Fruc_bis_ald_class-2"/>
</dbReference>
<dbReference type="NCBIfam" id="TIGR00167">
    <property type="entry name" value="cbbA"/>
    <property type="match status" value="1"/>
</dbReference>
<dbReference type="NCBIfam" id="TIGR01859">
    <property type="entry name" value="fruc_bis_ald"/>
    <property type="match status" value="1"/>
</dbReference>
<dbReference type="PANTHER" id="PTHR30304">
    <property type="entry name" value="D-TAGATOSE-1,6-BISPHOSPHATE ALDOLASE"/>
    <property type="match status" value="1"/>
</dbReference>
<dbReference type="PANTHER" id="PTHR30304:SF0">
    <property type="entry name" value="D-TAGATOSE-1,6-BISPHOSPHATE ALDOLASE SUBUNIT GATY-RELATED"/>
    <property type="match status" value="1"/>
</dbReference>
<dbReference type="Pfam" id="PF01116">
    <property type="entry name" value="F_bP_aldolase"/>
    <property type="match status" value="1"/>
</dbReference>
<dbReference type="PIRSF" id="PIRSF001359">
    <property type="entry name" value="F_bP_aldolase_II"/>
    <property type="match status" value="1"/>
</dbReference>
<dbReference type="SUPFAM" id="SSF51569">
    <property type="entry name" value="Aldolase"/>
    <property type="match status" value="1"/>
</dbReference>
<dbReference type="PROSITE" id="PS00602">
    <property type="entry name" value="ALDOLASE_CLASS_II_1"/>
    <property type="match status" value="1"/>
</dbReference>
<dbReference type="PROSITE" id="PS00806">
    <property type="entry name" value="ALDOLASE_CLASS_II_2"/>
    <property type="match status" value="1"/>
</dbReference>
<proteinExistence type="inferred from homology"/>
<gene>
    <name type="primary">iolJ</name>
    <name type="ordered locus">BLi04242</name>
    <name type="ordered locus">BL00237</name>
</gene>
<evidence type="ECO:0000250" key="1"/>
<evidence type="ECO:0000305" key="2"/>
<organism>
    <name type="scientific">Bacillus licheniformis (strain ATCC 14580 / DSM 13 / JCM 2505 / CCUG 7422 / NBRC 12200 / NCIMB 9375 / NCTC 10341 / NRRL NRS-1264 / Gibson 46)</name>
    <dbReference type="NCBI Taxonomy" id="279010"/>
    <lineage>
        <taxon>Bacteria</taxon>
        <taxon>Bacillati</taxon>
        <taxon>Bacillota</taxon>
        <taxon>Bacilli</taxon>
        <taxon>Bacillales</taxon>
        <taxon>Bacillaceae</taxon>
        <taxon>Bacillus</taxon>
    </lineage>
</organism>
<sequence length="292" mass="31615">MAFVSMKELLQEAKEHHYAIGQFNINGLQWTKAILEAAEEERSPVIAAASDRLIDYLGGFKTVSAMVAALIEEMSISVPVVLHLDHGKSPERCKQAIDAGFSSVMIDGSHSPIDENIAMTKEVVSYAGVRNVSVEAEVGTVGGMEDGLIGGVQYADIGECERIVKETGIDALAAALGSVHGKYQGEPNLGFKEMEEISRVTDIPLVLHGASGIPADQIARTIRLGHAKININTECMVAWTEKTRSIFKDNPDLYEPRAYMTPGISAVKETVKHKMREFGSSGKAVCTQKIEI</sequence>
<accession>Q65D09</accession>
<accession>Q62NI5</accession>